<name>PSIE_SHIFL</name>
<organism>
    <name type="scientific">Shigella flexneri</name>
    <dbReference type="NCBI Taxonomy" id="623"/>
    <lineage>
        <taxon>Bacteria</taxon>
        <taxon>Pseudomonadati</taxon>
        <taxon>Pseudomonadota</taxon>
        <taxon>Gammaproteobacteria</taxon>
        <taxon>Enterobacterales</taxon>
        <taxon>Enterobacteriaceae</taxon>
        <taxon>Shigella</taxon>
    </lineage>
</organism>
<proteinExistence type="inferred from homology"/>
<comment type="subcellular location">
    <subcellularLocation>
        <location evidence="1">Cell inner membrane</location>
        <topology evidence="1">Multi-pass membrane protein</topology>
    </subcellularLocation>
</comment>
<comment type="similarity">
    <text evidence="3">Belongs to the PsiE family.</text>
</comment>
<reference key="1">
    <citation type="journal article" date="2002" name="Nucleic Acids Res.">
        <title>Genome sequence of Shigella flexneri 2a: insights into pathogenicity through comparison with genomes of Escherichia coli K12 and O157.</title>
        <authorList>
            <person name="Jin Q."/>
            <person name="Yuan Z."/>
            <person name="Xu J."/>
            <person name="Wang Y."/>
            <person name="Shen Y."/>
            <person name="Lu W."/>
            <person name="Wang J."/>
            <person name="Liu H."/>
            <person name="Yang J."/>
            <person name="Yang F."/>
            <person name="Zhang X."/>
            <person name="Zhang J."/>
            <person name="Yang G."/>
            <person name="Wu H."/>
            <person name="Qu D."/>
            <person name="Dong J."/>
            <person name="Sun L."/>
            <person name="Xue Y."/>
            <person name="Zhao A."/>
            <person name="Gao Y."/>
            <person name="Zhu J."/>
            <person name="Kan B."/>
            <person name="Ding K."/>
            <person name="Chen S."/>
            <person name="Cheng H."/>
            <person name="Yao Z."/>
            <person name="He B."/>
            <person name="Chen R."/>
            <person name="Ma D."/>
            <person name="Qiang B."/>
            <person name="Wen Y."/>
            <person name="Hou Y."/>
            <person name="Yu J."/>
        </authorList>
    </citation>
    <scope>NUCLEOTIDE SEQUENCE [LARGE SCALE GENOMIC DNA]</scope>
    <source>
        <strain>301 / Serotype 2a</strain>
    </source>
</reference>
<reference key="2">
    <citation type="journal article" date="2003" name="Infect. Immun.">
        <title>Complete genome sequence and comparative genomics of Shigella flexneri serotype 2a strain 2457T.</title>
        <authorList>
            <person name="Wei J."/>
            <person name="Goldberg M.B."/>
            <person name="Burland V."/>
            <person name="Venkatesan M.M."/>
            <person name="Deng W."/>
            <person name="Fournier G."/>
            <person name="Mayhew G.F."/>
            <person name="Plunkett G. III"/>
            <person name="Rose D.J."/>
            <person name="Darling A."/>
            <person name="Mau B."/>
            <person name="Perna N.T."/>
            <person name="Payne S.M."/>
            <person name="Runyen-Janecky L.J."/>
            <person name="Zhou S."/>
            <person name="Schwartz D.C."/>
            <person name="Blattner F.R."/>
        </authorList>
    </citation>
    <scope>NUCLEOTIDE SEQUENCE [LARGE SCALE GENOMIC DNA]</scope>
    <source>
        <strain>ATCC 700930 / 2457T / Serotype 2a</strain>
    </source>
</reference>
<sequence length="136" mass="15597">MTSLSRPRVEFISTILQTVLNLGLLCLGLILVVFLGKETVHLADVLFAPEQTSKYELVEGLVVYFLYFEFIALIVKYFQSGFHFPLRYFVYIGITAIVRLIIVDHKSPLDVLIYSAAILLLVITLWLCNSKRLKRE</sequence>
<keyword id="KW-0997">Cell inner membrane</keyword>
<keyword id="KW-1003">Cell membrane</keyword>
<keyword id="KW-0472">Membrane</keyword>
<keyword id="KW-1185">Reference proteome</keyword>
<keyword id="KW-0812">Transmembrane</keyword>
<keyword id="KW-1133">Transmembrane helix</keyword>
<evidence type="ECO:0000250" key="1"/>
<evidence type="ECO:0000255" key="2"/>
<evidence type="ECO:0000305" key="3"/>
<protein>
    <recommendedName>
        <fullName>Protein PsiE</fullName>
    </recommendedName>
</protein>
<gene>
    <name type="primary">psiE</name>
    <name type="ordered locus">SF4175</name>
    <name type="ordered locus">S3556</name>
</gene>
<feature type="chain" id="PRO_0000160295" description="Protein PsiE">
    <location>
        <begin position="1"/>
        <end position="136"/>
    </location>
</feature>
<feature type="topological domain" description="Cytoplasmic" evidence="2">
    <location>
        <begin position="1"/>
        <end position="14"/>
    </location>
</feature>
<feature type="transmembrane region" description="Helical" evidence="2">
    <location>
        <begin position="15"/>
        <end position="35"/>
    </location>
</feature>
<feature type="topological domain" description="Periplasmic" evidence="2">
    <location>
        <begin position="36"/>
        <end position="54"/>
    </location>
</feature>
<feature type="transmembrane region" description="Helical" evidence="2">
    <location>
        <begin position="55"/>
        <end position="75"/>
    </location>
</feature>
<feature type="topological domain" description="Cytoplasmic" evidence="2">
    <location>
        <begin position="76"/>
        <end position="81"/>
    </location>
</feature>
<feature type="transmembrane region" description="Helical" evidence="2">
    <location>
        <begin position="82"/>
        <end position="102"/>
    </location>
</feature>
<feature type="topological domain" description="Periplasmic" evidence="2">
    <location>
        <begin position="103"/>
        <end position="107"/>
    </location>
</feature>
<feature type="transmembrane region" description="Helical" evidence="2">
    <location>
        <begin position="108"/>
        <end position="128"/>
    </location>
</feature>
<feature type="topological domain" description="Cytoplasmic" evidence="2">
    <location>
        <begin position="129"/>
        <end position="136"/>
    </location>
</feature>
<dbReference type="EMBL" id="AE005674">
    <property type="protein sequence ID" value="AAN45596.1"/>
    <property type="molecule type" value="Genomic_DNA"/>
</dbReference>
<dbReference type="EMBL" id="AE014073">
    <property type="protein sequence ID" value="AAP18603.1"/>
    <property type="molecule type" value="Genomic_DNA"/>
</dbReference>
<dbReference type="RefSeq" id="WP_000202902.1">
    <property type="nucleotide sequence ID" value="NZ_WPGW01000079.1"/>
</dbReference>
<dbReference type="SMR" id="P0A7D0"/>
<dbReference type="STRING" id="198214.SF4175"/>
<dbReference type="PaxDb" id="198214-SF4175"/>
<dbReference type="GeneID" id="93777857"/>
<dbReference type="KEGG" id="sfl:SF4175"/>
<dbReference type="KEGG" id="sfx:S3556"/>
<dbReference type="PATRIC" id="fig|198214.7.peg.4925"/>
<dbReference type="HOGENOM" id="CLU_127561_0_1_6"/>
<dbReference type="Proteomes" id="UP000001006">
    <property type="component" value="Chromosome"/>
</dbReference>
<dbReference type="Proteomes" id="UP000002673">
    <property type="component" value="Chromosome"/>
</dbReference>
<dbReference type="GO" id="GO:0005886">
    <property type="term" value="C:plasma membrane"/>
    <property type="evidence" value="ECO:0007669"/>
    <property type="project" value="UniProtKB-SubCell"/>
</dbReference>
<dbReference type="GO" id="GO:0016036">
    <property type="term" value="P:cellular response to phosphate starvation"/>
    <property type="evidence" value="ECO:0007669"/>
    <property type="project" value="InterPro"/>
</dbReference>
<dbReference type="HAMAP" id="MF_01048">
    <property type="entry name" value="PsiE"/>
    <property type="match status" value="1"/>
</dbReference>
<dbReference type="InterPro" id="IPR009315">
    <property type="entry name" value="P_starv_induced_PsiE"/>
</dbReference>
<dbReference type="InterPro" id="IPR020948">
    <property type="entry name" value="P_starv_induced_PsiE-like"/>
</dbReference>
<dbReference type="NCBIfam" id="NF002764">
    <property type="entry name" value="PRK02833.1-2"/>
    <property type="match status" value="1"/>
</dbReference>
<dbReference type="NCBIfam" id="NF002765">
    <property type="entry name" value="PRK02833.1-3"/>
    <property type="match status" value="1"/>
</dbReference>
<dbReference type="NCBIfam" id="NF002767">
    <property type="entry name" value="PRK02833.1-5"/>
    <property type="match status" value="1"/>
</dbReference>
<dbReference type="PANTHER" id="PTHR37819">
    <property type="entry name" value="PROTEIN PSIE"/>
    <property type="match status" value="1"/>
</dbReference>
<dbReference type="PANTHER" id="PTHR37819:SF1">
    <property type="entry name" value="PROTEIN PSIE"/>
    <property type="match status" value="1"/>
</dbReference>
<dbReference type="Pfam" id="PF06146">
    <property type="entry name" value="PsiE"/>
    <property type="match status" value="1"/>
</dbReference>
<dbReference type="PIRSF" id="PIRSF029598">
    <property type="entry name" value="PsiE"/>
    <property type="match status" value="1"/>
</dbReference>
<accession>P0A7D0</accession>
<accession>P23896</accession>